<sequence length="156" mass="18056">MSKWVYPILSIPEDKLAKAVIKNIDASVRDLYNVCKAIRGMNLKEAREFLNNVLEEKEALPFWRYSHGTSHRSNISRKWKVKSGRYPKKAIKYVLKLLDNAENNANSKGLDIDNLKIVHIAAHKGLVLKRYMTRAFGRSTRKYKYLSHIEVILGEV</sequence>
<organism>
    <name type="scientific">Sulfolobus acidocaldarius (strain ATCC 33909 / DSM 639 / JCM 8929 / NBRC 15157 / NCIMB 11770)</name>
    <dbReference type="NCBI Taxonomy" id="330779"/>
    <lineage>
        <taxon>Archaea</taxon>
        <taxon>Thermoproteota</taxon>
        <taxon>Thermoprotei</taxon>
        <taxon>Sulfolobales</taxon>
        <taxon>Sulfolobaceae</taxon>
        <taxon>Sulfolobus</taxon>
    </lineage>
</organism>
<keyword id="KW-0002">3D-structure</keyword>
<keyword id="KW-1185">Reference proteome</keyword>
<keyword id="KW-0687">Ribonucleoprotein</keyword>
<keyword id="KW-0689">Ribosomal protein</keyword>
<keyword id="KW-0694">RNA-binding</keyword>
<keyword id="KW-0699">rRNA-binding</keyword>
<evidence type="ECO:0000255" key="1">
    <source>
        <dbReference type="HAMAP-Rule" id="MF_01331"/>
    </source>
</evidence>
<evidence type="ECO:0000305" key="2"/>
<proteinExistence type="evidence at protein level"/>
<feature type="chain" id="PRO_0000125287" description="Large ribosomal subunit protein uL22">
    <location>
        <begin position="1"/>
        <end position="156"/>
    </location>
</feature>
<comment type="function">
    <text evidence="1">This protein binds specifically to 23S rRNA. It makes multiple contacts with different domains of the 23S rRNA in the assembled 50S subunit and ribosome.</text>
</comment>
<comment type="function">
    <text evidence="1">The globular domain of the protein is located near the polypeptide exit tunnel on the outside of the subunit, while an extended beta-hairpin is found that lines the wall of the exit tunnel in the center of the 70S ribosome.</text>
</comment>
<comment type="subunit">
    <text evidence="1">Part of the 50S ribosomal subunit.</text>
</comment>
<comment type="similarity">
    <text evidence="1">Belongs to the universal ribosomal protein uL22 family.</text>
</comment>
<dbReference type="EMBL" id="CP000077">
    <property type="protein sequence ID" value="AAY79984.1"/>
    <property type="molecule type" value="Genomic_DNA"/>
</dbReference>
<dbReference type="RefSeq" id="WP_011277486.1">
    <property type="nucleotide sequence ID" value="NC_007181.1"/>
</dbReference>
<dbReference type="PDB" id="8HKU">
    <property type="method" value="EM"/>
    <property type="resolution" value="2.72 A"/>
    <property type="chains" value="L22P=6-155"/>
</dbReference>
<dbReference type="PDB" id="8HKV">
    <property type="method" value="EM"/>
    <property type="resolution" value="4.94 A"/>
    <property type="chains" value="L22P=6-155"/>
</dbReference>
<dbReference type="PDB" id="8HKY">
    <property type="method" value="EM"/>
    <property type="resolution" value="4.45 A"/>
    <property type="chains" value="L22P=6-155"/>
</dbReference>
<dbReference type="PDB" id="8HKZ">
    <property type="method" value="EM"/>
    <property type="resolution" value="4.78 A"/>
    <property type="chains" value="L22P=6-155"/>
</dbReference>
<dbReference type="PDB" id="8HL1">
    <property type="method" value="EM"/>
    <property type="resolution" value="3.93 A"/>
    <property type="chains" value="L22P=6-155"/>
</dbReference>
<dbReference type="PDB" id="8HL2">
    <property type="method" value="EM"/>
    <property type="resolution" value="4.10 A"/>
    <property type="chains" value="L22P=6-155"/>
</dbReference>
<dbReference type="PDB" id="8HL3">
    <property type="method" value="EM"/>
    <property type="resolution" value="4.80 A"/>
    <property type="chains" value="L22P=6-155"/>
</dbReference>
<dbReference type="PDB" id="8HL4">
    <property type="method" value="EM"/>
    <property type="resolution" value="4.62 A"/>
    <property type="chains" value="L22P=6-155"/>
</dbReference>
<dbReference type="PDB" id="8HL5">
    <property type="method" value="EM"/>
    <property type="resolution" value="5.72 A"/>
    <property type="chains" value="L22P=6-155"/>
</dbReference>
<dbReference type="PDBsum" id="8HKU"/>
<dbReference type="PDBsum" id="8HKV"/>
<dbReference type="PDBsum" id="8HKY"/>
<dbReference type="PDBsum" id="8HKZ"/>
<dbReference type="PDBsum" id="8HL1"/>
<dbReference type="PDBsum" id="8HL2"/>
<dbReference type="PDBsum" id="8HL3"/>
<dbReference type="PDBsum" id="8HL4"/>
<dbReference type="PDBsum" id="8HL5"/>
<dbReference type="EMDB" id="EMD-34860"/>
<dbReference type="EMDB" id="EMD-34861"/>
<dbReference type="EMDB" id="EMD-34863"/>
<dbReference type="EMDB" id="EMD-34864"/>
<dbReference type="EMDB" id="EMD-34866"/>
<dbReference type="EMDB" id="EMD-34867"/>
<dbReference type="EMDB" id="EMD-34868"/>
<dbReference type="EMDB" id="EMD-34869"/>
<dbReference type="EMDB" id="EMD-34870"/>
<dbReference type="SMR" id="Q4JB45"/>
<dbReference type="STRING" id="330779.Saci_0592"/>
<dbReference type="GeneID" id="14551113"/>
<dbReference type="KEGG" id="sai:Saci_0592"/>
<dbReference type="PATRIC" id="fig|330779.12.peg.571"/>
<dbReference type="eggNOG" id="arCOG04098">
    <property type="taxonomic scope" value="Archaea"/>
</dbReference>
<dbReference type="HOGENOM" id="CLU_083987_0_2_2"/>
<dbReference type="Proteomes" id="UP000001018">
    <property type="component" value="Chromosome"/>
</dbReference>
<dbReference type="GO" id="GO:0022625">
    <property type="term" value="C:cytosolic large ribosomal subunit"/>
    <property type="evidence" value="ECO:0007669"/>
    <property type="project" value="TreeGrafter"/>
</dbReference>
<dbReference type="GO" id="GO:0019843">
    <property type="term" value="F:rRNA binding"/>
    <property type="evidence" value="ECO:0007669"/>
    <property type="project" value="UniProtKB-UniRule"/>
</dbReference>
<dbReference type="GO" id="GO:0003735">
    <property type="term" value="F:structural constituent of ribosome"/>
    <property type="evidence" value="ECO:0007669"/>
    <property type="project" value="InterPro"/>
</dbReference>
<dbReference type="GO" id="GO:0002181">
    <property type="term" value="P:cytoplasmic translation"/>
    <property type="evidence" value="ECO:0007669"/>
    <property type="project" value="TreeGrafter"/>
</dbReference>
<dbReference type="Gene3D" id="3.90.470.10">
    <property type="entry name" value="Ribosomal protein L22/L17"/>
    <property type="match status" value="1"/>
</dbReference>
<dbReference type="HAMAP" id="MF_01331_A">
    <property type="entry name" value="Ribosomal_uL22_A"/>
    <property type="match status" value="1"/>
</dbReference>
<dbReference type="InterPro" id="IPR001063">
    <property type="entry name" value="Ribosomal_uL22"/>
</dbReference>
<dbReference type="InterPro" id="IPR018260">
    <property type="entry name" value="Ribosomal_uL22_CS"/>
</dbReference>
<dbReference type="InterPro" id="IPR005721">
    <property type="entry name" value="Ribosomal_uL22_euk/arc"/>
</dbReference>
<dbReference type="InterPro" id="IPR036394">
    <property type="entry name" value="Ribosomal_uL22_sf"/>
</dbReference>
<dbReference type="NCBIfam" id="NF003260">
    <property type="entry name" value="PRK04223.1"/>
    <property type="match status" value="1"/>
</dbReference>
<dbReference type="NCBIfam" id="TIGR01038">
    <property type="entry name" value="uL22_arch_euk"/>
    <property type="match status" value="1"/>
</dbReference>
<dbReference type="PANTHER" id="PTHR11593">
    <property type="entry name" value="60S RIBOSOMAL PROTEIN L17"/>
    <property type="match status" value="1"/>
</dbReference>
<dbReference type="PANTHER" id="PTHR11593:SF10">
    <property type="entry name" value="60S RIBOSOMAL PROTEIN L17"/>
    <property type="match status" value="1"/>
</dbReference>
<dbReference type="Pfam" id="PF00237">
    <property type="entry name" value="Ribosomal_L22"/>
    <property type="match status" value="1"/>
</dbReference>
<dbReference type="SUPFAM" id="SSF54843">
    <property type="entry name" value="Ribosomal protein L22"/>
    <property type="match status" value="1"/>
</dbReference>
<dbReference type="PROSITE" id="PS00464">
    <property type="entry name" value="RIBOSOMAL_L22"/>
    <property type="match status" value="1"/>
</dbReference>
<reference key="1">
    <citation type="journal article" date="2005" name="J. Bacteriol.">
        <title>The genome of Sulfolobus acidocaldarius, a model organism of the Crenarchaeota.</title>
        <authorList>
            <person name="Chen L."/>
            <person name="Bruegger K."/>
            <person name="Skovgaard M."/>
            <person name="Redder P."/>
            <person name="She Q."/>
            <person name="Torarinsson E."/>
            <person name="Greve B."/>
            <person name="Awayez M."/>
            <person name="Zibat A."/>
            <person name="Klenk H.-P."/>
            <person name="Garrett R.A."/>
        </authorList>
    </citation>
    <scope>NUCLEOTIDE SEQUENCE [LARGE SCALE GENOMIC DNA]</scope>
    <source>
        <strain>ATCC 33909 / DSM 639 / JCM 8929 / NBRC 15157 / NCIMB 11770</strain>
    </source>
</reference>
<name>RL22_SULAC</name>
<gene>
    <name evidence="1" type="primary">rpl22</name>
    <name type="ordered locus">Saci_0592</name>
</gene>
<accession>Q4JB45</accession>
<protein>
    <recommendedName>
        <fullName evidence="1">Large ribosomal subunit protein uL22</fullName>
    </recommendedName>
    <alternativeName>
        <fullName evidence="2">50S ribosomal protein L22</fullName>
    </alternativeName>
</protein>